<reference key="1">
    <citation type="journal article" date="2005" name="Science">
        <title>The transcriptional landscape of the mammalian genome.</title>
        <authorList>
            <person name="Carninci P."/>
            <person name="Kasukawa T."/>
            <person name="Katayama S."/>
            <person name="Gough J."/>
            <person name="Frith M.C."/>
            <person name="Maeda N."/>
            <person name="Oyama R."/>
            <person name="Ravasi T."/>
            <person name="Lenhard B."/>
            <person name="Wells C."/>
            <person name="Kodzius R."/>
            <person name="Shimokawa K."/>
            <person name="Bajic V.B."/>
            <person name="Brenner S.E."/>
            <person name="Batalov S."/>
            <person name="Forrest A.R."/>
            <person name="Zavolan M."/>
            <person name="Davis M.J."/>
            <person name="Wilming L.G."/>
            <person name="Aidinis V."/>
            <person name="Allen J.E."/>
            <person name="Ambesi-Impiombato A."/>
            <person name="Apweiler R."/>
            <person name="Aturaliya R.N."/>
            <person name="Bailey T.L."/>
            <person name="Bansal M."/>
            <person name="Baxter L."/>
            <person name="Beisel K.W."/>
            <person name="Bersano T."/>
            <person name="Bono H."/>
            <person name="Chalk A.M."/>
            <person name="Chiu K.P."/>
            <person name="Choudhary V."/>
            <person name="Christoffels A."/>
            <person name="Clutterbuck D.R."/>
            <person name="Crowe M.L."/>
            <person name="Dalla E."/>
            <person name="Dalrymple B.P."/>
            <person name="de Bono B."/>
            <person name="Della Gatta G."/>
            <person name="di Bernardo D."/>
            <person name="Down T."/>
            <person name="Engstrom P."/>
            <person name="Fagiolini M."/>
            <person name="Faulkner G."/>
            <person name="Fletcher C.F."/>
            <person name="Fukushima T."/>
            <person name="Furuno M."/>
            <person name="Futaki S."/>
            <person name="Gariboldi M."/>
            <person name="Georgii-Hemming P."/>
            <person name="Gingeras T.R."/>
            <person name="Gojobori T."/>
            <person name="Green R.E."/>
            <person name="Gustincich S."/>
            <person name="Harbers M."/>
            <person name="Hayashi Y."/>
            <person name="Hensch T.K."/>
            <person name="Hirokawa N."/>
            <person name="Hill D."/>
            <person name="Huminiecki L."/>
            <person name="Iacono M."/>
            <person name="Ikeo K."/>
            <person name="Iwama A."/>
            <person name="Ishikawa T."/>
            <person name="Jakt M."/>
            <person name="Kanapin A."/>
            <person name="Katoh M."/>
            <person name="Kawasawa Y."/>
            <person name="Kelso J."/>
            <person name="Kitamura H."/>
            <person name="Kitano H."/>
            <person name="Kollias G."/>
            <person name="Krishnan S.P."/>
            <person name="Kruger A."/>
            <person name="Kummerfeld S.K."/>
            <person name="Kurochkin I.V."/>
            <person name="Lareau L.F."/>
            <person name="Lazarevic D."/>
            <person name="Lipovich L."/>
            <person name="Liu J."/>
            <person name="Liuni S."/>
            <person name="McWilliam S."/>
            <person name="Madan Babu M."/>
            <person name="Madera M."/>
            <person name="Marchionni L."/>
            <person name="Matsuda H."/>
            <person name="Matsuzawa S."/>
            <person name="Miki H."/>
            <person name="Mignone F."/>
            <person name="Miyake S."/>
            <person name="Morris K."/>
            <person name="Mottagui-Tabar S."/>
            <person name="Mulder N."/>
            <person name="Nakano N."/>
            <person name="Nakauchi H."/>
            <person name="Ng P."/>
            <person name="Nilsson R."/>
            <person name="Nishiguchi S."/>
            <person name="Nishikawa S."/>
            <person name="Nori F."/>
            <person name="Ohara O."/>
            <person name="Okazaki Y."/>
            <person name="Orlando V."/>
            <person name="Pang K.C."/>
            <person name="Pavan W.J."/>
            <person name="Pavesi G."/>
            <person name="Pesole G."/>
            <person name="Petrovsky N."/>
            <person name="Piazza S."/>
            <person name="Reed J."/>
            <person name="Reid J.F."/>
            <person name="Ring B.Z."/>
            <person name="Ringwald M."/>
            <person name="Rost B."/>
            <person name="Ruan Y."/>
            <person name="Salzberg S.L."/>
            <person name="Sandelin A."/>
            <person name="Schneider C."/>
            <person name="Schoenbach C."/>
            <person name="Sekiguchi K."/>
            <person name="Semple C.A."/>
            <person name="Seno S."/>
            <person name="Sessa L."/>
            <person name="Sheng Y."/>
            <person name="Shibata Y."/>
            <person name="Shimada H."/>
            <person name="Shimada K."/>
            <person name="Silva D."/>
            <person name="Sinclair B."/>
            <person name="Sperling S."/>
            <person name="Stupka E."/>
            <person name="Sugiura K."/>
            <person name="Sultana R."/>
            <person name="Takenaka Y."/>
            <person name="Taki K."/>
            <person name="Tammoja K."/>
            <person name="Tan S.L."/>
            <person name="Tang S."/>
            <person name="Taylor M.S."/>
            <person name="Tegner J."/>
            <person name="Teichmann S.A."/>
            <person name="Ueda H.R."/>
            <person name="van Nimwegen E."/>
            <person name="Verardo R."/>
            <person name="Wei C.L."/>
            <person name="Yagi K."/>
            <person name="Yamanishi H."/>
            <person name="Zabarovsky E."/>
            <person name="Zhu S."/>
            <person name="Zimmer A."/>
            <person name="Hide W."/>
            <person name="Bult C."/>
            <person name="Grimmond S.M."/>
            <person name="Teasdale R.D."/>
            <person name="Liu E.T."/>
            <person name="Brusic V."/>
            <person name="Quackenbush J."/>
            <person name="Wahlestedt C."/>
            <person name="Mattick J.S."/>
            <person name="Hume D.A."/>
            <person name="Kai C."/>
            <person name="Sasaki D."/>
            <person name="Tomaru Y."/>
            <person name="Fukuda S."/>
            <person name="Kanamori-Katayama M."/>
            <person name="Suzuki M."/>
            <person name="Aoki J."/>
            <person name="Arakawa T."/>
            <person name="Iida J."/>
            <person name="Imamura K."/>
            <person name="Itoh M."/>
            <person name="Kato T."/>
            <person name="Kawaji H."/>
            <person name="Kawagashira N."/>
            <person name="Kawashima T."/>
            <person name="Kojima M."/>
            <person name="Kondo S."/>
            <person name="Konno H."/>
            <person name="Nakano K."/>
            <person name="Ninomiya N."/>
            <person name="Nishio T."/>
            <person name="Okada M."/>
            <person name="Plessy C."/>
            <person name="Shibata K."/>
            <person name="Shiraki T."/>
            <person name="Suzuki S."/>
            <person name="Tagami M."/>
            <person name="Waki K."/>
            <person name="Watahiki A."/>
            <person name="Okamura-Oho Y."/>
            <person name="Suzuki H."/>
            <person name="Kawai J."/>
            <person name="Hayashizaki Y."/>
        </authorList>
    </citation>
    <scope>NUCLEOTIDE SEQUENCE [LARGE SCALE MRNA]</scope>
    <source>
        <strain>C57BL/6J</strain>
        <tissue>Testis</tissue>
    </source>
</reference>
<reference key="2">
    <citation type="journal article" date="2004" name="Genome Res.">
        <title>The status, quality, and expansion of the NIH full-length cDNA project: the Mammalian Gene Collection (MGC).</title>
        <authorList>
            <consortium name="The MGC Project Team"/>
        </authorList>
    </citation>
    <scope>NUCLEOTIDE SEQUENCE [LARGE SCALE MRNA]</scope>
</reference>
<keyword id="KW-1185">Reference proteome</keyword>
<proteinExistence type="inferred from homology"/>
<dbReference type="EMBL" id="AK006301">
    <property type="status" value="NOT_ANNOTATED_CDS"/>
    <property type="molecule type" value="mRNA"/>
</dbReference>
<dbReference type="EMBL" id="AK007014">
    <property type="status" value="NOT_ANNOTATED_CDS"/>
    <property type="molecule type" value="mRNA"/>
</dbReference>
<dbReference type="EMBL" id="BC107222">
    <property type="protein sequence ID" value="AAI07223.1"/>
    <property type="molecule type" value="mRNA"/>
</dbReference>
<dbReference type="EMBL" id="BC107223">
    <property type="protein sequence ID" value="AAI07224.1"/>
    <property type="molecule type" value="mRNA"/>
</dbReference>
<dbReference type="CCDS" id="CCDS36867.1"/>
<dbReference type="RefSeq" id="NP_001029209.1">
    <property type="nucleotide sequence ID" value="NM_001034037.1"/>
</dbReference>
<dbReference type="FunCoup" id="Q3KNL4">
    <property type="interactions" value="2"/>
</dbReference>
<dbReference type="STRING" id="10090.ENSMUSP00000098289"/>
<dbReference type="PaxDb" id="10090-ENSMUSP00000098289"/>
<dbReference type="Antibodypedia" id="50326">
    <property type="antibodies" value="32 antibodies from 9 providers"/>
</dbReference>
<dbReference type="DNASU" id="67085"/>
<dbReference type="Ensembl" id="ENSMUST00000100723.4">
    <property type="protein sequence ID" value="ENSMUSP00000098289.3"/>
    <property type="gene ID" value="ENSMUSG00000072473.5"/>
</dbReference>
<dbReference type="GeneID" id="67085"/>
<dbReference type="KEGG" id="mmu:67085"/>
<dbReference type="UCSC" id="uc007syu.1">
    <property type="organism name" value="mouse"/>
</dbReference>
<dbReference type="AGR" id="MGI:1914335"/>
<dbReference type="MGI" id="MGI:1914335">
    <property type="gene designation" value="1700024G13Rik"/>
</dbReference>
<dbReference type="VEuPathDB" id="HostDB:ENSMUSG00000072473"/>
<dbReference type="eggNOG" id="ENOG502S4W1">
    <property type="taxonomic scope" value="Eukaryota"/>
</dbReference>
<dbReference type="GeneTree" id="ENSGT00390000002871"/>
<dbReference type="HOGENOM" id="CLU_189555_0_0_1"/>
<dbReference type="InParanoid" id="Q3KNL4"/>
<dbReference type="OMA" id="VEHRTYR"/>
<dbReference type="OrthoDB" id="10003460at2759"/>
<dbReference type="PhylomeDB" id="Q3KNL4"/>
<dbReference type="TreeFam" id="TF329673"/>
<dbReference type="BioGRID-ORCS" id="67085">
    <property type="hits" value="2 hits in 78 CRISPR screens"/>
</dbReference>
<dbReference type="PRO" id="PR:Q3KNL4"/>
<dbReference type="Proteomes" id="UP000000589">
    <property type="component" value="Chromosome 14"/>
</dbReference>
<dbReference type="RNAct" id="Q3KNL4">
    <property type="molecule type" value="protein"/>
</dbReference>
<dbReference type="Bgee" id="ENSMUSG00000072473">
    <property type="expression patterns" value="Expressed in spermatid and 27 other cell types or tissues"/>
</dbReference>
<dbReference type="InterPro" id="IPR027885">
    <property type="entry name" value="UPF0728"/>
</dbReference>
<dbReference type="PANTHER" id="PTHR28448">
    <property type="entry name" value="UPF0728 PROTEIN C10ORF53"/>
    <property type="match status" value="1"/>
</dbReference>
<dbReference type="PANTHER" id="PTHR28448:SF1">
    <property type="entry name" value="UPF0728 PROTEIN C10ORF53"/>
    <property type="match status" value="1"/>
</dbReference>
<dbReference type="Pfam" id="PF15092">
    <property type="entry name" value="UPF0728"/>
    <property type="match status" value="1"/>
</dbReference>
<protein>
    <recommendedName>
        <fullName>UPF0728 protein C10orf53 homolog</fullName>
    </recommendedName>
</protein>
<feature type="chain" id="PRO_0000351543" description="UPF0728 protein C10orf53 homolog">
    <location>
        <begin position="1"/>
        <end position="93"/>
    </location>
</feature>
<organism>
    <name type="scientific">Mus musculus</name>
    <name type="common">Mouse</name>
    <dbReference type="NCBI Taxonomy" id="10090"/>
    <lineage>
        <taxon>Eukaryota</taxon>
        <taxon>Metazoa</taxon>
        <taxon>Chordata</taxon>
        <taxon>Craniata</taxon>
        <taxon>Vertebrata</taxon>
        <taxon>Euteleostomi</taxon>
        <taxon>Mammalia</taxon>
        <taxon>Eutheria</taxon>
        <taxon>Euarchontoglires</taxon>
        <taxon>Glires</taxon>
        <taxon>Rodentia</taxon>
        <taxon>Myomorpha</taxon>
        <taxon>Muroidea</taxon>
        <taxon>Muridae</taxon>
        <taxon>Murinae</taxon>
        <taxon>Mus</taxon>
        <taxon>Mus</taxon>
    </lineage>
</organism>
<accession>Q3KNL4</accession>
<sequence length="93" mass="10386">MPAQAVVTLRYGPYSAVGLSVEHRTYRLQGLQAVLAKDGHQIILEQIEDWNLVELVVNEETVFQCDIQELEFGGDGKLDPLCEEARIAVLNAF</sequence>
<comment type="similarity">
    <text evidence="1">Belongs to the UPF0728 family.</text>
</comment>
<evidence type="ECO:0000305" key="1"/>
<name>CJ053_MOUSE</name>